<organism>
    <name type="scientific">Rattus norvegicus</name>
    <name type="common">Rat</name>
    <dbReference type="NCBI Taxonomy" id="10116"/>
    <lineage>
        <taxon>Eukaryota</taxon>
        <taxon>Metazoa</taxon>
        <taxon>Chordata</taxon>
        <taxon>Craniata</taxon>
        <taxon>Vertebrata</taxon>
        <taxon>Euteleostomi</taxon>
        <taxon>Mammalia</taxon>
        <taxon>Eutheria</taxon>
        <taxon>Euarchontoglires</taxon>
        <taxon>Glires</taxon>
        <taxon>Rodentia</taxon>
        <taxon>Myomorpha</taxon>
        <taxon>Muroidea</taxon>
        <taxon>Muridae</taxon>
        <taxon>Murinae</taxon>
        <taxon>Rattus</taxon>
    </lineage>
</organism>
<accession>Q5XI62</accession>
<sequence>MVPAACMLLWALLLSLESRAAGAEDQKTNPTATTVRMQRVSFHFGGPARSLRSTNPTARTSISRKLRVTLEDENDALATADRLAVPAAAELLSTVTGYSRSSLSNSGDWEEDGSLEEGVVDTRKTTNNPITIFSTTNTVGSSSTTGRFVANSQEREIRLTTDMRSPSSKTTVDLSSETTLQQWSTPGSTPSPWPKPSLTAMPSPEDLRVVLMPWGPWHCHCKSGTMSRSRAGKLHGLSGRLRVGALNELRTEHRPCTYQLCTCNRQLEECPLDSSLCTDHSCSTHVASTISPIPVHLRRRPILPPTSPSPSPALAFWKRVRIGLEDIWNSLSSVFTETQPIERT</sequence>
<protein>
    <recommendedName>
        <fullName>Protein MENT</fullName>
    </recommendedName>
    <alternativeName>
        <fullName>Methylated in normal thymocytes protein</fullName>
    </alternativeName>
</protein>
<name>MENT_RAT</name>
<comment type="function">
    <text evidence="1">Involved in control of cellular proliferation. Onconcogenic modifier contributing to the tumor suppressor function of DNMT3B (By similarity).</text>
</comment>
<comment type="subcellular location">
    <subcellularLocation>
        <location evidence="4">Secreted</location>
    </subcellularLocation>
</comment>
<comment type="PTM">
    <text evidence="1">Phosphorylation sites are present in the extracellular medium.</text>
</comment>
<dbReference type="EMBL" id="BC083828">
    <property type="protein sequence ID" value="AAH83828.1"/>
    <property type="molecule type" value="mRNA"/>
</dbReference>
<dbReference type="RefSeq" id="NP_001007639.1">
    <property type="nucleotide sequence ID" value="NM_001007638.1"/>
</dbReference>
<dbReference type="SMR" id="Q5XI62"/>
<dbReference type="FunCoup" id="Q5XI62">
    <property type="interactions" value="8"/>
</dbReference>
<dbReference type="STRING" id="10116.ENSRNOP00000059268"/>
<dbReference type="GlyGen" id="Q5XI62">
    <property type="glycosylation" value="1 site"/>
</dbReference>
<dbReference type="iPTMnet" id="Q5XI62"/>
<dbReference type="PhosphoSitePlus" id="Q5XI62"/>
<dbReference type="PaxDb" id="10116-ENSRNOP00000059268"/>
<dbReference type="GeneID" id="295265"/>
<dbReference type="KEGG" id="rno:295265"/>
<dbReference type="UCSC" id="RGD:1359334">
    <property type="organism name" value="rat"/>
</dbReference>
<dbReference type="AGR" id="RGD:1359334"/>
<dbReference type="CTD" id="295265"/>
<dbReference type="RGD" id="1359334">
    <property type="gene designation" value="C2h1orf56"/>
</dbReference>
<dbReference type="VEuPathDB" id="HostDB:ENSRNOG00000021656"/>
<dbReference type="eggNOG" id="ENOG502SZ3R">
    <property type="taxonomic scope" value="Eukaryota"/>
</dbReference>
<dbReference type="HOGENOM" id="CLU_066649_0_0_1"/>
<dbReference type="InParanoid" id="Q5XI62"/>
<dbReference type="OrthoDB" id="89529at9989"/>
<dbReference type="PRO" id="PR:Q5XI62"/>
<dbReference type="Proteomes" id="UP000002494">
    <property type="component" value="Chromosome 2"/>
</dbReference>
<dbReference type="Bgee" id="ENSRNOG00000021656">
    <property type="expression patterns" value="Expressed in testis and 3 other cell types or tissues"/>
</dbReference>
<dbReference type="GO" id="GO:0005576">
    <property type="term" value="C:extracellular region"/>
    <property type="evidence" value="ECO:0007669"/>
    <property type="project" value="UniProtKB-SubCell"/>
</dbReference>
<dbReference type="GO" id="GO:0042127">
    <property type="term" value="P:regulation of cell population proliferation"/>
    <property type="evidence" value="ECO:0000266"/>
    <property type="project" value="RGD"/>
</dbReference>
<dbReference type="InterPro" id="IPR029292">
    <property type="entry name" value="MENT"/>
</dbReference>
<dbReference type="PANTHER" id="PTHR16240">
    <property type="entry name" value="PROTEIN MENT"/>
    <property type="match status" value="1"/>
</dbReference>
<dbReference type="PANTHER" id="PTHR16240:SF2">
    <property type="entry name" value="PROTEIN MENT"/>
    <property type="match status" value="1"/>
</dbReference>
<dbReference type="Pfam" id="PF15322">
    <property type="entry name" value="PMSI1"/>
    <property type="match status" value="1"/>
</dbReference>
<keyword id="KW-0597">Phosphoprotein</keyword>
<keyword id="KW-1185">Reference proteome</keyword>
<keyword id="KW-0964">Secreted</keyword>
<keyword id="KW-0732">Signal</keyword>
<reference key="1">
    <citation type="journal article" date="2004" name="Genome Res.">
        <title>The status, quality, and expansion of the NIH full-length cDNA project: the Mammalian Gene Collection (MGC).</title>
        <authorList>
            <consortium name="The MGC Project Team"/>
        </authorList>
    </citation>
    <scope>NUCLEOTIDE SEQUENCE [LARGE SCALE MRNA]</scope>
    <source>
        <tissue>Testis</tissue>
    </source>
</reference>
<feature type="signal peptide" evidence="2">
    <location>
        <begin position="1"/>
        <end position="22"/>
    </location>
</feature>
<feature type="chain" id="PRO_0000304971" description="Protein MENT">
    <location>
        <begin position="23"/>
        <end position="344"/>
    </location>
</feature>
<feature type="region of interest" description="Disordered" evidence="3">
    <location>
        <begin position="162"/>
        <end position="197"/>
    </location>
</feature>
<feature type="compositionally biased region" description="Polar residues" evidence="3">
    <location>
        <begin position="162"/>
        <end position="182"/>
    </location>
</feature>
<proteinExistence type="evidence at transcript level"/>
<gene>
    <name type="primary">Ment</name>
</gene>
<evidence type="ECO:0000250" key="1"/>
<evidence type="ECO:0000255" key="2"/>
<evidence type="ECO:0000256" key="3">
    <source>
        <dbReference type="SAM" id="MobiDB-lite"/>
    </source>
</evidence>
<evidence type="ECO:0000305" key="4"/>